<sequence>MQILNPILPVMEDILGNLAELKASGKITNQQIDTVELQWYESERNILRKTSKSGREVAFRLLKEGQRLKHDDVVFVSESLVIAIEILPSEVIVLSPKTLPEMARACYEIGNKHSPLFLDGDEVTLPYDKPMFEWLQAAGFGPQKAERRLSQALRANSAQGHGHSHGHSHSHDHHGYHHHGDGNWHKH</sequence>
<gene>
    <name evidence="1" type="primary">ureE</name>
</gene>
<protein>
    <recommendedName>
        <fullName evidence="1">Urease accessory protein UreE</fullName>
    </recommendedName>
</protein>
<dbReference type="EMBL" id="U89957">
    <property type="protein sequence ID" value="AAC00062.1"/>
    <property type="status" value="ALT_INIT"/>
    <property type="molecule type" value="Genomic_DNA"/>
</dbReference>
<dbReference type="RefSeq" id="WP_042655078.1">
    <property type="nucleotide sequence ID" value="NZ_LS483358.1"/>
</dbReference>
<dbReference type="SMR" id="O54422"/>
<dbReference type="GeneID" id="48599900"/>
<dbReference type="PATRIC" id="fig|416269.6.peg.1680"/>
<dbReference type="GO" id="GO:0005737">
    <property type="term" value="C:cytoplasm"/>
    <property type="evidence" value="ECO:0007669"/>
    <property type="project" value="UniProtKB-SubCell"/>
</dbReference>
<dbReference type="GO" id="GO:0016151">
    <property type="term" value="F:nickel cation binding"/>
    <property type="evidence" value="ECO:0007669"/>
    <property type="project" value="UniProtKB-UniRule"/>
</dbReference>
<dbReference type="GO" id="GO:0051082">
    <property type="term" value="F:unfolded protein binding"/>
    <property type="evidence" value="ECO:0007669"/>
    <property type="project" value="UniProtKB-UniRule"/>
</dbReference>
<dbReference type="GO" id="GO:0006457">
    <property type="term" value="P:protein folding"/>
    <property type="evidence" value="ECO:0007669"/>
    <property type="project" value="InterPro"/>
</dbReference>
<dbReference type="GO" id="GO:0065003">
    <property type="term" value="P:protein-containing complex assembly"/>
    <property type="evidence" value="ECO:0007669"/>
    <property type="project" value="InterPro"/>
</dbReference>
<dbReference type="GO" id="GO:0019627">
    <property type="term" value="P:urea metabolic process"/>
    <property type="evidence" value="ECO:0007669"/>
    <property type="project" value="InterPro"/>
</dbReference>
<dbReference type="CDD" id="cd00571">
    <property type="entry name" value="UreE"/>
    <property type="match status" value="1"/>
</dbReference>
<dbReference type="Gene3D" id="2.60.260.20">
    <property type="entry name" value="Urease metallochaperone UreE, N-terminal domain"/>
    <property type="match status" value="1"/>
</dbReference>
<dbReference type="Gene3D" id="3.30.70.790">
    <property type="entry name" value="UreE, C-terminal domain"/>
    <property type="match status" value="1"/>
</dbReference>
<dbReference type="HAMAP" id="MF_00822">
    <property type="entry name" value="UreE"/>
    <property type="match status" value="1"/>
</dbReference>
<dbReference type="InterPro" id="IPR012406">
    <property type="entry name" value="UreE"/>
</dbReference>
<dbReference type="InterPro" id="IPR007864">
    <property type="entry name" value="UreE_C_dom"/>
</dbReference>
<dbReference type="InterPro" id="IPR004029">
    <property type="entry name" value="UreE_N"/>
</dbReference>
<dbReference type="InterPro" id="IPR036118">
    <property type="entry name" value="UreE_N_sf"/>
</dbReference>
<dbReference type="NCBIfam" id="NF009754">
    <property type="entry name" value="PRK13261.1-6"/>
    <property type="match status" value="1"/>
</dbReference>
<dbReference type="Pfam" id="PF05194">
    <property type="entry name" value="UreE_C"/>
    <property type="match status" value="1"/>
</dbReference>
<dbReference type="Pfam" id="PF02814">
    <property type="entry name" value="UreE_N"/>
    <property type="match status" value="1"/>
</dbReference>
<dbReference type="PIRSF" id="PIRSF036402">
    <property type="entry name" value="Ureas_acces_UreE"/>
    <property type="match status" value="1"/>
</dbReference>
<dbReference type="SMART" id="SM00988">
    <property type="entry name" value="UreE_N"/>
    <property type="match status" value="1"/>
</dbReference>
<dbReference type="SUPFAM" id="SSF69737">
    <property type="entry name" value="Urease metallochaperone UreE, C-terminal domain"/>
    <property type="match status" value="1"/>
</dbReference>
<dbReference type="SUPFAM" id="SSF69287">
    <property type="entry name" value="Urease metallochaperone UreE, N-terminal domain"/>
    <property type="match status" value="1"/>
</dbReference>
<keyword id="KW-0143">Chaperone</keyword>
<keyword id="KW-0963">Cytoplasm</keyword>
<keyword id="KW-0533">Nickel</keyword>
<keyword id="KW-0996">Nickel insertion</keyword>
<name>UREE_ACTPL</name>
<organism>
    <name type="scientific">Actinobacillus pleuropneumoniae</name>
    <name type="common">Haemophilus pleuropneumoniae</name>
    <dbReference type="NCBI Taxonomy" id="715"/>
    <lineage>
        <taxon>Bacteria</taxon>
        <taxon>Pseudomonadati</taxon>
        <taxon>Pseudomonadota</taxon>
        <taxon>Gammaproteobacteria</taxon>
        <taxon>Pasteurellales</taxon>
        <taxon>Pasteurellaceae</taxon>
        <taxon>Actinobacillus</taxon>
    </lineage>
</organism>
<accession>O54422</accession>
<feature type="chain" id="PRO_0000067627" description="Urease accessory protein UreE">
    <location>
        <begin position="1"/>
        <end position="187"/>
    </location>
</feature>
<feature type="region of interest" description="Disordered" evidence="2">
    <location>
        <begin position="154"/>
        <end position="187"/>
    </location>
</feature>
<feature type="compositionally biased region" description="Basic residues" evidence="2">
    <location>
        <begin position="162"/>
        <end position="177"/>
    </location>
</feature>
<feature type="compositionally biased region" description="Basic and acidic residues" evidence="2">
    <location>
        <begin position="178"/>
        <end position="187"/>
    </location>
</feature>
<comment type="function">
    <text evidence="1">Involved in urease metallocenter assembly. Binds nickel. Probably functions as a nickel donor during metallocenter assembly.</text>
</comment>
<comment type="subcellular location">
    <subcellularLocation>
        <location evidence="1">Cytoplasm</location>
    </subcellularLocation>
</comment>
<comment type="similarity">
    <text evidence="1">Belongs to the UreE family.</text>
</comment>
<comment type="sequence caution" evidence="3">
    <conflict type="erroneous initiation">
        <sequence resource="EMBL-CDS" id="AAC00062"/>
    </conflict>
</comment>
<reference key="1">
    <citation type="journal article" date="1997" name="Infect. Immun.">
        <title>Genetic and biochemical analyses of Actinobacillus pleuropneumoniae urease.</title>
        <authorList>
            <person name="Bosse J.T."/>
            <person name="Macinnes J.I."/>
        </authorList>
    </citation>
    <scope>NUCLEOTIDE SEQUENCE [GENOMIC DNA]</scope>
    <source>
        <strain>CM5 / Serotype 1</strain>
    </source>
</reference>
<proteinExistence type="inferred from homology"/>
<evidence type="ECO:0000255" key="1">
    <source>
        <dbReference type="HAMAP-Rule" id="MF_00822"/>
    </source>
</evidence>
<evidence type="ECO:0000256" key="2">
    <source>
        <dbReference type="SAM" id="MobiDB-lite"/>
    </source>
</evidence>
<evidence type="ECO:0000305" key="3"/>